<comment type="function">
    <text evidence="1">Catalyzes the conversion of 1-hydroxy-2-methyl-2-(E)-butenyl 4-diphosphate (HMBPP) into a mixture of isopentenyl diphosphate (IPP) and dimethylallyl diphosphate (DMAPP). Acts in the terminal step of the DOXP/MEP pathway for isoprenoid precursor biosynthesis.</text>
</comment>
<comment type="catalytic activity">
    <reaction evidence="1">
        <text>isopentenyl diphosphate + 2 oxidized [2Fe-2S]-[ferredoxin] + H2O = (2E)-4-hydroxy-3-methylbut-2-enyl diphosphate + 2 reduced [2Fe-2S]-[ferredoxin] + 2 H(+)</text>
        <dbReference type="Rhea" id="RHEA:24488"/>
        <dbReference type="Rhea" id="RHEA-COMP:10000"/>
        <dbReference type="Rhea" id="RHEA-COMP:10001"/>
        <dbReference type="ChEBI" id="CHEBI:15377"/>
        <dbReference type="ChEBI" id="CHEBI:15378"/>
        <dbReference type="ChEBI" id="CHEBI:33737"/>
        <dbReference type="ChEBI" id="CHEBI:33738"/>
        <dbReference type="ChEBI" id="CHEBI:128753"/>
        <dbReference type="ChEBI" id="CHEBI:128769"/>
        <dbReference type="EC" id="1.17.7.4"/>
    </reaction>
</comment>
<comment type="catalytic activity">
    <reaction evidence="1">
        <text>dimethylallyl diphosphate + 2 oxidized [2Fe-2S]-[ferredoxin] + H2O = (2E)-4-hydroxy-3-methylbut-2-enyl diphosphate + 2 reduced [2Fe-2S]-[ferredoxin] + 2 H(+)</text>
        <dbReference type="Rhea" id="RHEA:24825"/>
        <dbReference type="Rhea" id="RHEA-COMP:10000"/>
        <dbReference type="Rhea" id="RHEA-COMP:10001"/>
        <dbReference type="ChEBI" id="CHEBI:15377"/>
        <dbReference type="ChEBI" id="CHEBI:15378"/>
        <dbReference type="ChEBI" id="CHEBI:33737"/>
        <dbReference type="ChEBI" id="CHEBI:33738"/>
        <dbReference type="ChEBI" id="CHEBI:57623"/>
        <dbReference type="ChEBI" id="CHEBI:128753"/>
        <dbReference type="EC" id="1.17.7.4"/>
    </reaction>
</comment>
<comment type="cofactor">
    <cofactor evidence="1">
        <name>[4Fe-4S] cluster</name>
        <dbReference type="ChEBI" id="CHEBI:49883"/>
    </cofactor>
    <text evidence="1">Binds 1 [4Fe-4S] cluster per subunit.</text>
</comment>
<comment type="pathway">
    <text evidence="1">Isoprenoid biosynthesis; dimethylallyl diphosphate biosynthesis; dimethylallyl diphosphate from (2E)-4-hydroxy-3-methylbutenyl diphosphate: step 1/1.</text>
</comment>
<comment type="pathway">
    <text evidence="1">Isoprenoid biosynthesis; isopentenyl diphosphate biosynthesis via DXP pathway; isopentenyl diphosphate from 1-deoxy-D-xylulose 5-phosphate: step 6/6.</text>
</comment>
<comment type="similarity">
    <text evidence="1">Belongs to the IspH family.</text>
</comment>
<proteinExistence type="inferred from homology"/>
<protein>
    <recommendedName>
        <fullName evidence="1">4-hydroxy-3-methylbut-2-enyl diphosphate reductase</fullName>
        <shortName evidence="1">HMBPP reductase</shortName>
        <ecNumber evidence="1">1.17.7.4</ecNumber>
    </recommendedName>
</protein>
<organism>
    <name type="scientific">Oleidesulfovibrio alaskensis (strain ATCC BAA-1058 / DSM 17464 / G20)</name>
    <name type="common">Desulfovibrio alaskensis</name>
    <dbReference type="NCBI Taxonomy" id="207559"/>
    <lineage>
        <taxon>Bacteria</taxon>
        <taxon>Pseudomonadati</taxon>
        <taxon>Thermodesulfobacteriota</taxon>
        <taxon>Desulfovibrionia</taxon>
        <taxon>Desulfovibrionales</taxon>
        <taxon>Desulfovibrionaceae</taxon>
        <taxon>Oleidesulfovibrio</taxon>
    </lineage>
</organism>
<accession>Q316F5</accession>
<evidence type="ECO:0000255" key="1">
    <source>
        <dbReference type="HAMAP-Rule" id="MF_00191"/>
    </source>
</evidence>
<feature type="chain" id="PRO_1000021114" description="4-hydroxy-3-methylbut-2-enyl diphosphate reductase">
    <location>
        <begin position="1"/>
        <end position="281"/>
    </location>
</feature>
<feature type="active site" description="Proton donor" evidence="1">
    <location>
        <position position="126"/>
    </location>
</feature>
<feature type="binding site" evidence="1">
    <location>
        <position position="12"/>
    </location>
    <ligand>
        <name>[4Fe-4S] cluster</name>
        <dbReference type="ChEBI" id="CHEBI:49883"/>
    </ligand>
</feature>
<feature type="binding site" evidence="1">
    <location>
        <position position="41"/>
    </location>
    <ligand>
        <name>(2E)-4-hydroxy-3-methylbut-2-enyl diphosphate</name>
        <dbReference type="ChEBI" id="CHEBI:128753"/>
    </ligand>
</feature>
<feature type="binding site" evidence="1">
    <location>
        <position position="41"/>
    </location>
    <ligand>
        <name>dimethylallyl diphosphate</name>
        <dbReference type="ChEBI" id="CHEBI:57623"/>
    </ligand>
</feature>
<feature type="binding site" evidence="1">
    <location>
        <position position="41"/>
    </location>
    <ligand>
        <name>isopentenyl diphosphate</name>
        <dbReference type="ChEBI" id="CHEBI:128769"/>
    </ligand>
</feature>
<feature type="binding site" evidence="1">
    <location>
        <position position="74"/>
    </location>
    <ligand>
        <name>(2E)-4-hydroxy-3-methylbut-2-enyl diphosphate</name>
        <dbReference type="ChEBI" id="CHEBI:128753"/>
    </ligand>
</feature>
<feature type="binding site" evidence="1">
    <location>
        <position position="74"/>
    </location>
    <ligand>
        <name>dimethylallyl diphosphate</name>
        <dbReference type="ChEBI" id="CHEBI:57623"/>
    </ligand>
</feature>
<feature type="binding site" evidence="1">
    <location>
        <position position="74"/>
    </location>
    <ligand>
        <name>isopentenyl diphosphate</name>
        <dbReference type="ChEBI" id="CHEBI:128769"/>
    </ligand>
</feature>
<feature type="binding site" evidence="1">
    <location>
        <position position="96"/>
    </location>
    <ligand>
        <name>[4Fe-4S] cluster</name>
        <dbReference type="ChEBI" id="CHEBI:49883"/>
    </ligand>
</feature>
<feature type="binding site" evidence="1">
    <location>
        <position position="124"/>
    </location>
    <ligand>
        <name>(2E)-4-hydroxy-3-methylbut-2-enyl diphosphate</name>
        <dbReference type="ChEBI" id="CHEBI:128753"/>
    </ligand>
</feature>
<feature type="binding site" evidence="1">
    <location>
        <position position="124"/>
    </location>
    <ligand>
        <name>dimethylallyl diphosphate</name>
        <dbReference type="ChEBI" id="CHEBI:57623"/>
    </ligand>
</feature>
<feature type="binding site" evidence="1">
    <location>
        <position position="124"/>
    </location>
    <ligand>
        <name>isopentenyl diphosphate</name>
        <dbReference type="ChEBI" id="CHEBI:128769"/>
    </ligand>
</feature>
<feature type="binding site" evidence="1">
    <location>
        <position position="164"/>
    </location>
    <ligand>
        <name>(2E)-4-hydroxy-3-methylbut-2-enyl diphosphate</name>
        <dbReference type="ChEBI" id="CHEBI:128753"/>
    </ligand>
</feature>
<feature type="binding site" evidence="1">
    <location>
        <position position="193"/>
    </location>
    <ligand>
        <name>[4Fe-4S] cluster</name>
        <dbReference type="ChEBI" id="CHEBI:49883"/>
    </ligand>
</feature>
<feature type="binding site" evidence="1">
    <location>
        <position position="221"/>
    </location>
    <ligand>
        <name>(2E)-4-hydroxy-3-methylbut-2-enyl diphosphate</name>
        <dbReference type="ChEBI" id="CHEBI:128753"/>
    </ligand>
</feature>
<feature type="binding site" evidence="1">
    <location>
        <position position="221"/>
    </location>
    <ligand>
        <name>dimethylallyl diphosphate</name>
        <dbReference type="ChEBI" id="CHEBI:57623"/>
    </ligand>
</feature>
<feature type="binding site" evidence="1">
    <location>
        <position position="221"/>
    </location>
    <ligand>
        <name>isopentenyl diphosphate</name>
        <dbReference type="ChEBI" id="CHEBI:128769"/>
    </ligand>
</feature>
<feature type="binding site" evidence="1">
    <location>
        <position position="223"/>
    </location>
    <ligand>
        <name>(2E)-4-hydroxy-3-methylbut-2-enyl diphosphate</name>
        <dbReference type="ChEBI" id="CHEBI:128753"/>
    </ligand>
</feature>
<feature type="binding site" evidence="1">
    <location>
        <position position="223"/>
    </location>
    <ligand>
        <name>dimethylallyl diphosphate</name>
        <dbReference type="ChEBI" id="CHEBI:57623"/>
    </ligand>
</feature>
<feature type="binding site" evidence="1">
    <location>
        <position position="223"/>
    </location>
    <ligand>
        <name>isopentenyl diphosphate</name>
        <dbReference type="ChEBI" id="CHEBI:128769"/>
    </ligand>
</feature>
<feature type="binding site" evidence="1">
    <location>
        <position position="265"/>
    </location>
    <ligand>
        <name>(2E)-4-hydroxy-3-methylbut-2-enyl diphosphate</name>
        <dbReference type="ChEBI" id="CHEBI:128753"/>
    </ligand>
</feature>
<feature type="binding site" evidence="1">
    <location>
        <position position="265"/>
    </location>
    <ligand>
        <name>dimethylallyl diphosphate</name>
        <dbReference type="ChEBI" id="CHEBI:57623"/>
    </ligand>
</feature>
<feature type="binding site" evidence="1">
    <location>
        <position position="265"/>
    </location>
    <ligand>
        <name>isopentenyl diphosphate</name>
        <dbReference type="ChEBI" id="CHEBI:128769"/>
    </ligand>
</feature>
<reference key="1">
    <citation type="journal article" date="2011" name="J. Bacteriol.">
        <title>Complete genome sequence and updated annotation of Desulfovibrio alaskensis G20.</title>
        <authorList>
            <person name="Hauser L.J."/>
            <person name="Land M.L."/>
            <person name="Brown S.D."/>
            <person name="Larimer F."/>
            <person name="Keller K.L."/>
            <person name="Rapp-Giles B.J."/>
            <person name="Price M.N."/>
            <person name="Lin M."/>
            <person name="Bruce D.C."/>
            <person name="Detter J.C."/>
            <person name="Tapia R."/>
            <person name="Han C.S."/>
            <person name="Goodwin L.A."/>
            <person name="Cheng J.F."/>
            <person name="Pitluck S."/>
            <person name="Copeland A."/>
            <person name="Lucas S."/>
            <person name="Nolan M."/>
            <person name="Lapidus A.L."/>
            <person name="Palumbo A.V."/>
            <person name="Wall J.D."/>
        </authorList>
    </citation>
    <scope>NUCLEOTIDE SEQUENCE [LARGE SCALE GENOMIC DNA]</scope>
    <source>
        <strain>ATCC BAA-1058 / DSM 17464 / G20</strain>
    </source>
</reference>
<keyword id="KW-0004">4Fe-4S</keyword>
<keyword id="KW-0408">Iron</keyword>
<keyword id="KW-0411">Iron-sulfur</keyword>
<keyword id="KW-0414">Isoprene biosynthesis</keyword>
<keyword id="KW-0479">Metal-binding</keyword>
<keyword id="KW-0560">Oxidoreductase</keyword>
<keyword id="KW-1185">Reference proteome</keyword>
<sequence>MHVKRAATAGFCMGVGLALKKLDRELDNNAKDIATLGPIIHNPQVLRRYEQKGVRCYTDPAEARSGQRVVIRAHGIPEETESALAAAGVDLVDATCPKVKRAQLGIARQREKGRTLLLFGEHDHPEVQGLLSYAGEGAVVFGSLEELQNGPLEDDRHYFLAAQTTQDKHAFTSVIEWVRRRFGDHVPVLDTICDATRERQDEAIAIARSVDVMVVVGGFASGNTRRLAEVAQAQGVPTYHVETPDQLPLDAIRGYGAAGLTAGASTPKSIIDETQKLLESL</sequence>
<gene>
    <name evidence="1" type="primary">ispH</name>
    <name type="ordered locus">Dde_0390</name>
</gene>
<dbReference type="EC" id="1.17.7.4" evidence="1"/>
<dbReference type="EMBL" id="CP000112">
    <property type="protein sequence ID" value="ABB37191.1"/>
    <property type="molecule type" value="Genomic_DNA"/>
</dbReference>
<dbReference type="RefSeq" id="WP_011366527.1">
    <property type="nucleotide sequence ID" value="NC_007519.1"/>
</dbReference>
<dbReference type="SMR" id="Q316F5"/>
<dbReference type="STRING" id="207559.Dde_0390"/>
<dbReference type="DNASU" id="3756322"/>
<dbReference type="KEGG" id="dde:Dde_0390"/>
<dbReference type="eggNOG" id="COG0761">
    <property type="taxonomic scope" value="Bacteria"/>
</dbReference>
<dbReference type="HOGENOM" id="CLU_027486_0_1_7"/>
<dbReference type="UniPathway" id="UPA00056">
    <property type="reaction ID" value="UER00097"/>
</dbReference>
<dbReference type="UniPathway" id="UPA00059">
    <property type="reaction ID" value="UER00105"/>
</dbReference>
<dbReference type="Proteomes" id="UP000002710">
    <property type="component" value="Chromosome"/>
</dbReference>
<dbReference type="GO" id="GO:0051539">
    <property type="term" value="F:4 iron, 4 sulfur cluster binding"/>
    <property type="evidence" value="ECO:0007669"/>
    <property type="project" value="UniProtKB-UniRule"/>
</dbReference>
<dbReference type="GO" id="GO:0051745">
    <property type="term" value="F:4-hydroxy-3-methylbut-2-enyl diphosphate reductase activity"/>
    <property type="evidence" value="ECO:0007669"/>
    <property type="project" value="UniProtKB-UniRule"/>
</dbReference>
<dbReference type="GO" id="GO:0046872">
    <property type="term" value="F:metal ion binding"/>
    <property type="evidence" value="ECO:0007669"/>
    <property type="project" value="UniProtKB-KW"/>
</dbReference>
<dbReference type="GO" id="GO:0050992">
    <property type="term" value="P:dimethylallyl diphosphate biosynthetic process"/>
    <property type="evidence" value="ECO:0007669"/>
    <property type="project" value="UniProtKB-UniRule"/>
</dbReference>
<dbReference type="GO" id="GO:0019288">
    <property type="term" value="P:isopentenyl diphosphate biosynthetic process, methylerythritol 4-phosphate pathway"/>
    <property type="evidence" value="ECO:0007669"/>
    <property type="project" value="UniProtKB-UniRule"/>
</dbReference>
<dbReference type="GO" id="GO:0016114">
    <property type="term" value="P:terpenoid biosynthetic process"/>
    <property type="evidence" value="ECO:0007669"/>
    <property type="project" value="UniProtKB-UniRule"/>
</dbReference>
<dbReference type="CDD" id="cd13944">
    <property type="entry name" value="lytB_ispH"/>
    <property type="match status" value="1"/>
</dbReference>
<dbReference type="Gene3D" id="3.40.50.11270">
    <property type="match status" value="1"/>
</dbReference>
<dbReference type="Gene3D" id="3.40.1010.20">
    <property type="entry name" value="4-hydroxy-3-methylbut-2-enyl diphosphate reductase, catalytic domain"/>
    <property type="match status" value="2"/>
</dbReference>
<dbReference type="HAMAP" id="MF_00191">
    <property type="entry name" value="IspH"/>
    <property type="match status" value="1"/>
</dbReference>
<dbReference type="InterPro" id="IPR003451">
    <property type="entry name" value="LytB/IspH"/>
</dbReference>
<dbReference type="NCBIfam" id="TIGR00216">
    <property type="entry name" value="ispH_lytB"/>
    <property type="match status" value="1"/>
</dbReference>
<dbReference type="PANTHER" id="PTHR30426">
    <property type="entry name" value="4-HYDROXY-3-METHYLBUT-2-ENYL DIPHOSPHATE REDUCTASE"/>
    <property type="match status" value="1"/>
</dbReference>
<dbReference type="PANTHER" id="PTHR30426:SF0">
    <property type="entry name" value="4-HYDROXY-3-METHYLBUT-2-ENYL DIPHOSPHATE REDUCTASE"/>
    <property type="match status" value="1"/>
</dbReference>
<dbReference type="Pfam" id="PF02401">
    <property type="entry name" value="LYTB"/>
    <property type="match status" value="1"/>
</dbReference>
<name>ISPH_OLEA2</name>